<gene>
    <name evidence="6" type="ordered locus">At1g58060</name>
    <name evidence="7" type="ORF">T15M6.7</name>
</gene>
<comment type="catalytic activity">
    <reaction evidence="5">
        <text>ATP + H2O = ADP + phosphate + H(+)</text>
        <dbReference type="Rhea" id="RHEA:13065"/>
        <dbReference type="ChEBI" id="CHEBI:15377"/>
        <dbReference type="ChEBI" id="CHEBI:15378"/>
        <dbReference type="ChEBI" id="CHEBI:30616"/>
        <dbReference type="ChEBI" id="CHEBI:43474"/>
        <dbReference type="ChEBI" id="CHEBI:456216"/>
        <dbReference type="EC" id="3.6.4.13"/>
    </reaction>
</comment>
<comment type="subcellular location">
    <subcellularLocation>
        <location evidence="1">Plastid</location>
        <location evidence="1">Chloroplast</location>
    </subcellularLocation>
</comment>
<comment type="similarity">
    <text evidence="5">Belongs to the DExH box helicase family.</text>
</comment>
<comment type="sequence caution" evidence="5">
    <conflict type="erroneous gene model prediction">
        <sequence resource="EMBL-CDS" id="AAG50701"/>
    </conflict>
</comment>
<dbReference type="EC" id="3.6.4.13" evidence="5"/>
<dbReference type="EMBL" id="AC079604">
    <property type="protein sequence ID" value="AAG50701.1"/>
    <property type="status" value="ALT_SEQ"/>
    <property type="molecule type" value="Genomic_DNA"/>
</dbReference>
<dbReference type="EMBL" id="CP002684">
    <property type="protein sequence ID" value="AEE33493.1"/>
    <property type="molecule type" value="Genomic_DNA"/>
</dbReference>
<dbReference type="EMBL" id="AK227490">
    <property type="protein sequence ID" value="BAE99490.1"/>
    <property type="molecule type" value="mRNA"/>
</dbReference>
<dbReference type="EMBL" id="BT004601">
    <property type="protein sequence ID" value="AAO42847.1"/>
    <property type="molecule type" value="mRNA"/>
</dbReference>
<dbReference type="PIR" id="G96613">
    <property type="entry name" value="G96613"/>
</dbReference>
<dbReference type="RefSeq" id="NP_176103.2">
    <property type="nucleotide sequence ID" value="NM_104588.4"/>
</dbReference>
<dbReference type="SMR" id="F4I9Q5"/>
<dbReference type="FunCoup" id="F4I9Q5">
    <property type="interactions" value="4068"/>
</dbReference>
<dbReference type="STRING" id="3702.F4I9Q5"/>
<dbReference type="PaxDb" id="3702-AT1G58060.1"/>
<dbReference type="ProteomicsDB" id="224251"/>
<dbReference type="EnsemblPlants" id="AT1G58060.1">
    <property type="protein sequence ID" value="AT1G58060.1"/>
    <property type="gene ID" value="AT1G58060"/>
</dbReference>
<dbReference type="GeneID" id="842173"/>
<dbReference type="Gramene" id="AT1G58060.1">
    <property type="protein sequence ID" value="AT1G58060.1"/>
    <property type="gene ID" value="AT1G58060"/>
</dbReference>
<dbReference type="KEGG" id="ath:AT1G58060"/>
<dbReference type="Araport" id="AT1G58060"/>
<dbReference type="TAIR" id="AT1G58060"/>
<dbReference type="eggNOG" id="KOG0920">
    <property type="taxonomic scope" value="Eukaryota"/>
</dbReference>
<dbReference type="HOGENOM" id="CLU_001832_1_4_1"/>
<dbReference type="InParanoid" id="F4I9Q5"/>
<dbReference type="OMA" id="SWFANMS"/>
<dbReference type="PRO" id="PR:F4I9Q5"/>
<dbReference type="Proteomes" id="UP000006548">
    <property type="component" value="Chromosome 1"/>
</dbReference>
<dbReference type="ExpressionAtlas" id="F4I9Q5">
    <property type="expression patterns" value="baseline and differential"/>
</dbReference>
<dbReference type="GO" id="GO:0009507">
    <property type="term" value="C:chloroplast"/>
    <property type="evidence" value="ECO:0007669"/>
    <property type="project" value="UniProtKB-SubCell"/>
</dbReference>
<dbReference type="GO" id="GO:0005524">
    <property type="term" value="F:ATP binding"/>
    <property type="evidence" value="ECO:0007669"/>
    <property type="project" value="UniProtKB-KW"/>
</dbReference>
<dbReference type="GO" id="GO:0016887">
    <property type="term" value="F:ATP hydrolysis activity"/>
    <property type="evidence" value="ECO:0007669"/>
    <property type="project" value="RHEA"/>
</dbReference>
<dbReference type="GO" id="GO:0003723">
    <property type="term" value="F:RNA binding"/>
    <property type="evidence" value="ECO:0007669"/>
    <property type="project" value="UniProtKB-KW"/>
</dbReference>
<dbReference type="GO" id="GO:0003724">
    <property type="term" value="F:RNA helicase activity"/>
    <property type="evidence" value="ECO:0007669"/>
    <property type="project" value="UniProtKB-EC"/>
</dbReference>
<dbReference type="CDD" id="cd17917">
    <property type="entry name" value="DEXHc_RHA-like"/>
    <property type="match status" value="1"/>
</dbReference>
<dbReference type="CDD" id="cd00048">
    <property type="entry name" value="DSRM_SF"/>
    <property type="match status" value="1"/>
</dbReference>
<dbReference type="CDD" id="cd18791">
    <property type="entry name" value="SF2_C_RHA"/>
    <property type="match status" value="1"/>
</dbReference>
<dbReference type="FunFam" id="3.40.50.300:FF:000819">
    <property type="entry name" value="ATP dependent RNA helicase, putative"/>
    <property type="match status" value="1"/>
</dbReference>
<dbReference type="FunFam" id="3.40.50.300:FF:000500">
    <property type="entry name" value="ATP-dependent RNA helicase DHX29"/>
    <property type="match status" value="1"/>
</dbReference>
<dbReference type="FunFam" id="1.20.120.1080:FF:000002">
    <property type="entry name" value="Putative ATP-dependent RNA helicase DHX36"/>
    <property type="match status" value="1"/>
</dbReference>
<dbReference type="Gene3D" id="1.20.120.1080">
    <property type="match status" value="1"/>
</dbReference>
<dbReference type="Gene3D" id="3.30.160.20">
    <property type="match status" value="1"/>
</dbReference>
<dbReference type="Gene3D" id="3.40.50.300">
    <property type="entry name" value="P-loop containing nucleotide triphosphate hydrolases"/>
    <property type="match status" value="2"/>
</dbReference>
<dbReference type="InterPro" id="IPR011709">
    <property type="entry name" value="DEAD-box_helicase_OB_fold"/>
</dbReference>
<dbReference type="InterPro" id="IPR011545">
    <property type="entry name" value="DEAD/DEAH_box_helicase_dom"/>
</dbReference>
<dbReference type="InterPro" id="IPR048333">
    <property type="entry name" value="HA2_WH"/>
</dbReference>
<dbReference type="InterPro" id="IPR007502">
    <property type="entry name" value="Helicase-assoc_dom"/>
</dbReference>
<dbReference type="InterPro" id="IPR014001">
    <property type="entry name" value="Helicase_ATP-bd"/>
</dbReference>
<dbReference type="InterPro" id="IPR001650">
    <property type="entry name" value="Helicase_C-like"/>
</dbReference>
<dbReference type="InterPro" id="IPR027417">
    <property type="entry name" value="P-loop_NTPase"/>
</dbReference>
<dbReference type="InterPro" id="IPR056890">
    <property type="entry name" value="UBA_DHX29-like"/>
</dbReference>
<dbReference type="PANTHER" id="PTHR18934">
    <property type="entry name" value="ATP-DEPENDENT RNA HELICASE"/>
    <property type="match status" value="1"/>
</dbReference>
<dbReference type="PANTHER" id="PTHR18934:SF246">
    <property type="entry name" value="DEXH-BOX ATP-DEPENDENT RNA HELICASE DEXH4, CHLOROPLASTIC-RELATED"/>
    <property type="match status" value="1"/>
</dbReference>
<dbReference type="Pfam" id="PF00270">
    <property type="entry name" value="DEAD"/>
    <property type="match status" value="1"/>
</dbReference>
<dbReference type="Pfam" id="PF21010">
    <property type="entry name" value="HA2_C"/>
    <property type="match status" value="1"/>
</dbReference>
<dbReference type="Pfam" id="PF04408">
    <property type="entry name" value="HA2_N"/>
    <property type="match status" value="1"/>
</dbReference>
<dbReference type="Pfam" id="PF00271">
    <property type="entry name" value="Helicase_C"/>
    <property type="match status" value="1"/>
</dbReference>
<dbReference type="Pfam" id="PF07717">
    <property type="entry name" value="OB_NTP_bind"/>
    <property type="match status" value="1"/>
</dbReference>
<dbReference type="Pfam" id="PF24899">
    <property type="entry name" value="UBA_DHX29"/>
    <property type="match status" value="1"/>
</dbReference>
<dbReference type="SMART" id="SM00487">
    <property type="entry name" value="DEXDc"/>
    <property type="match status" value="1"/>
</dbReference>
<dbReference type="SMART" id="SM00847">
    <property type="entry name" value="HA2"/>
    <property type="match status" value="1"/>
</dbReference>
<dbReference type="SMART" id="SM00490">
    <property type="entry name" value="HELICc"/>
    <property type="match status" value="1"/>
</dbReference>
<dbReference type="SUPFAM" id="SSF52540">
    <property type="entry name" value="P-loop containing nucleoside triphosphate hydrolases"/>
    <property type="match status" value="1"/>
</dbReference>
<dbReference type="PROSITE" id="PS51192">
    <property type="entry name" value="HELICASE_ATP_BIND_1"/>
    <property type="match status" value="1"/>
</dbReference>
<dbReference type="PROSITE" id="PS51194">
    <property type="entry name" value="HELICASE_CTER"/>
    <property type="match status" value="1"/>
</dbReference>
<organism>
    <name type="scientific">Arabidopsis thaliana</name>
    <name type="common">Mouse-ear cress</name>
    <dbReference type="NCBI Taxonomy" id="3702"/>
    <lineage>
        <taxon>Eukaryota</taxon>
        <taxon>Viridiplantae</taxon>
        <taxon>Streptophyta</taxon>
        <taxon>Embryophyta</taxon>
        <taxon>Tracheophyta</taxon>
        <taxon>Spermatophyta</taxon>
        <taxon>Magnoliopsida</taxon>
        <taxon>eudicotyledons</taxon>
        <taxon>Gunneridae</taxon>
        <taxon>Pentapetalae</taxon>
        <taxon>rosids</taxon>
        <taxon>malvids</taxon>
        <taxon>Brassicales</taxon>
        <taxon>Brassicaceae</taxon>
        <taxon>Camelineae</taxon>
        <taxon>Arabidopsis</taxon>
    </lineage>
</organism>
<accession>F4I9Q5</accession>
<accession>Q0WTQ8</accession>
<accession>Q84VZ2</accession>
<accession>Q9C6F9</accession>
<reference key="1">
    <citation type="journal article" date="2000" name="Nature">
        <title>Sequence and analysis of chromosome 1 of the plant Arabidopsis thaliana.</title>
        <authorList>
            <person name="Theologis A."/>
            <person name="Ecker J.R."/>
            <person name="Palm C.J."/>
            <person name="Federspiel N.A."/>
            <person name="Kaul S."/>
            <person name="White O."/>
            <person name="Alonso J."/>
            <person name="Altafi H."/>
            <person name="Araujo R."/>
            <person name="Bowman C.L."/>
            <person name="Brooks S.Y."/>
            <person name="Buehler E."/>
            <person name="Chan A."/>
            <person name="Chao Q."/>
            <person name="Chen H."/>
            <person name="Cheuk R.F."/>
            <person name="Chin C.W."/>
            <person name="Chung M.K."/>
            <person name="Conn L."/>
            <person name="Conway A.B."/>
            <person name="Conway A.R."/>
            <person name="Creasy T.H."/>
            <person name="Dewar K."/>
            <person name="Dunn P."/>
            <person name="Etgu P."/>
            <person name="Feldblyum T.V."/>
            <person name="Feng J.-D."/>
            <person name="Fong B."/>
            <person name="Fujii C.Y."/>
            <person name="Gill J.E."/>
            <person name="Goldsmith A.D."/>
            <person name="Haas B."/>
            <person name="Hansen N.F."/>
            <person name="Hughes B."/>
            <person name="Huizar L."/>
            <person name="Hunter J.L."/>
            <person name="Jenkins J."/>
            <person name="Johnson-Hopson C."/>
            <person name="Khan S."/>
            <person name="Khaykin E."/>
            <person name="Kim C.J."/>
            <person name="Koo H.L."/>
            <person name="Kremenetskaia I."/>
            <person name="Kurtz D.B."/>
            <person name="Kwan A."/>
            <person name="Lam B."/>
            <person name="Langin-Hooper S."/>
            <person name="Lee A."/>
            <person name="Lee J.M."/>
            <person name="Lenz C.A."/>
            <person name="Li J.H."/>
            <person name="Li Y.-P."/>
            <person name="Lin X."/>
            <person name="Liu S.X."/>
            <person name="Liu Z.A."/>
            <person name="Luros J.S."/>
            <person name="Maiti R."/>
            <person name="Marziali A."/>
            <person name="Militscher J."/>
            <person name="Miranda M."/>
            <person name="Nguyen M."/>
            <person name="Nierman W.C."/>
            <person name="Osborne B.I."/>
            <person name="Pai G."/>
            <person name="Peterson J."/>
            <person name="Pham P.K."/>
            <person name="Rizzo M."/>
            <person name="Rooney T."/>
            <person name="Rowley D."/>
            <person name="Sakano H."/>
            <person name="Salzberg S.L."/>
            <person name="Schwartz J.R."/>
            <person name="Shinn P."/>
            <person name="Southwick A.M."/>
            <person name="Sun H."/>
            <person name="Tallon L.J."/>
            <person name="Tambunga G."/>
            <person name="Toriumi M.J."/>
            <person name="Town C.D."/>
            <person name="Utterback T."/>
            <person name="Van Aken S."/>
            <person name="Vaysberg M."/>
            <person name="Vysotskaia V.S."/>
            <person name="Walker M."/>
            <person name="Wu D."/>
            <person name="Yu G."/>
            <person name="Fraser C.M."/>
            <person name="Venter J.C."/>
            <person name="Davis R.W."/>
        </authorList>
    </citation>
    <scope>NUCLEOTIDE SEQUENCE [LARGE SCALE GENOMIC DNA]</scope>
    <source>
        <strain>cv. Columbia</strain>
    </source>
</reference>
<reference key="2">
    <citation type="journal article" date="2017" name="Plant J.">
        <title>Araport11: a complete reannotation of the Arabidopsis thaliana reference genome.</title>
        <authorList>
            <person name="Cheng C.Y."/>
            <person name="Krishnakumar V."/>
            <person name="Chan A.P."/>
            <person name="Thibaud-Nissen F."/>
            <person name="Schobel S."/>
            <person name="Town C.D."/>
        </authorList>
    </citation>
    <scope>GENOME REANNOTATION</scope>
    <source>
        <strain>cv. Columbia</strain>
    </source>
</reference>
<reference key="3">
    <citation type="submission" date="2006-07" db="EMBL/GenBank/DDBJ databases">
        <title>Large-scale analysis of RIKEN Arabidopsis full-length (RAFL) cDNAs.</title>
        <authorList>
            <person name="Totoki Y."/>
            <person name="Seki M."/>
            <person name="Ishida J."/>
            <person name="Nakajima M."/>
            <person name="Enju A."/>
            <person name="Kamiya A."/>
            <person name="Narusaka M."/>
            <person name="Shin-i T."/>
            <person name="Nakagawa M."/>
            <person name="Sakamoto N."/>
            <person name="Oishi K."/>
            <person name="Kohara Y."/>
            <person name="Kobayashi M."/>
            <person name="Toyoda A."/>
            <person name="Sakaki Y."/>
            <person name="Sakurai T."/>
            <person name="Iida K."/>
            <person name="Akiyama K."/>
            <person name="Satou M."/>
            <person name="Toyoda T."/>
            <person name="Konagaya A."/>
            <person name="Carninci P."/>
            <person name="Kawai J."/>
            <person name="Hayashizaki Y."/>
            <person name="Shinozaki K."/>
        </authorList>
    </citation>
    <scope>NUCLEOTIDE SEQUENCE [LARGE SCALE MRNA] OF 1172-1459</scope>
    <source>
        <strain>cv. Columbia</strain>
    </source>
</reference>
<reference key="4">
    <citation type="journal article" date="2003" name="Science">
        <title>Empirical analysis of transcriptional activity in the Arabidopsis genome.</title>
        <authorList>
            <person name="Yamada K."/>
            <person name="Lim J."/>
            <person name="Dale J.M."/>
            <person name="Chen H."/>
            <person name="Shinn P."/>
            <person name="Palm C.J."/>
            <person name="Southwick A.M."/>
            <person name="Wu H.C."/>
            <person name="Kim C.J."/>
            <person name="Nguyen M."/>
            <person name="Pham P.K."/>
            <person name="Cheuk R.F."/>
            <person name="Karlin-Newmann G."/>
            <person name="Liu S.X."/>
            <person name="Lam B."/>
            <person name="Sakano H."/>
            <person name="Wu T."/>
            <person name="Yu G."/>
            <person name="Miranda M."/>
            <person name="Quach H.L."/>
            <person name="Tripp M."/>
            <person name="Chang C.H."/>
            <person name="Lee J.M."/>
            <person name="Toriumi M.J."/>
            <person name="Chan M.M."/>
            <person name="Tang C.C."/>
            <person name="Onodera C.S."/>
            <person name="Deng J.M."/>
            <person name="Akiyama K."/>
            <person name="Ansari Y."/>
            <person name="Arakawa T."/>
            <person name="Banh J."/>
            <person name="Banno F."/>
            <person name="Bowser L."/>
            <person name="Brooks S.Y."/>
            <person name="Carninci P."/>
            <person name="Chao Q."/>
            <person name="Choy N."/>
            <person name="Enju A."/>
            <person name="Goldsmith A.D."/>
            <person name="Gurjal M."/>
            <person name="Hansen N.F."/>
            <person name="Hayashizaki Y."/>
            <person name="Johnson-Hopson C."/>
            <person name="Hsuan V.W."/>
            <person name="Iida K."/>
            <person name="Karnes M."/>
            <person name="Khan S."/>
            <person name="Koesema E."/>
            <person name="Ishida J."/>
            <person name="Jiang P.X."/>
            <person name="Jones T."/>
            <person name="Kawai J."/>
            <person name="Kamiya A."/>
            <person name="Meyers C."/>
            <person name="Nakajima M."/>
            <person name="Narusaka M."/>
            <person name="Seki M."/>
            <person name="Sakurai T."/>
            <person name="Satou M."/>
            <person name="Tamse R."/>
            <person name="Vaysberg M."/>
            <person name="Wallender E.K."/>
            <person name="Wong C."/>
            <person name="Yamamura Y."/>
            <person name="Yuan S."/>
            <person name="Shinozaki K."/>
            <person name="Davis R.W."/>
            <person name="Theologis A."/>
            <person name="Ecker J.R."/>
        </authorList>
    </citation>
    <scope>NUCLEOTIDE SEQUENCE [LARGE SCALE MRNA] OF 1200-1459</scope>
    <source>
        <strain>cv. Columbia</strain>
    </source>
</reference>
<reference key="5">
    <citation type="journal article" date="2013" name="PLoS ONE">
        <title>Genome-wide comparative in silico analysis of the RNA helicase gene family in Zea mays and Glycine max: a comparison with Arabidopsis and Oryza sativa.</title>
        <authorList>
            <person name="Xu R."/>
            <person name="Zhang S."/>
            <person name="Huang J."/>
            <person name="Zheng C."/>
        </authorList>
    </citation>
    <scope>GENE FAMILY</scope>
</reference>
<keyword id="KW-0067">ATP-binding</keyword>
<keyword id="KW-0150">Chloroplast</keyword>
<keyword id="KW-0347">Helicase</keyword>
<keyword id="KW-0378">Hydrolase</keyword>
<keyword id="KW-0547">Nucleotide-binding</keyword>
<keyword id="KW-0934">Plastid</keyword>
<keyword id="KW-1185">Reference proteome</keyword>
<keyword id="KW-0694">RNA-binding</keyword>
<keyword id="KW-0809">Transit peptide</keyword>
<feature type="transit peptide" description="Chloroplast" evidence="1">
    <location>
        <begin position="1"/>
        <end position="37"/>
    </location>
</feature>
<feature type="chain" id="PRO_0000435297" description="DExH-box ATP-dependent RNA helicase DExH7, chloroplastic">
    <location>
        <begin position="38"/>
        <end position="1459"/>
    </location>
</feature>
<feature type="domain" description="Helicase ATP-binding" evidence="2">
    <location>
        <begin position="624"/>
        <end position="801"/>
    </location>
</feature>
<feature type="domain" description="Helicase C-terminal" evidence="3">
    <location>
        <begin position="901"/>
        <end position="1076"/>
    </location>
</feature>
<feature type="region of interest" description="Disordered" evidence="4">
    <location>
        <begin position="1"/>
        <end position="42"/>
    </location>
</feature>
<feature type="region of interest" description="Disordered" evidence="4">
    <location>
        <begin position="324"/>
        <end position="352"/>
    </location>
</feature>
<feature type="short sequence motif" description="DEIH box" evidence="5">
    <location>
        <begin position="742"/>
        <end position="745"/>
    </location>
</feature>
<feature type="compositionally biased region" description="Low complexity" evidence="4">
    <location>
        <begin position="9"/>
        <end position="30"/>
    </location>
</feature>
<feature type="binding site" evidence="2">
    <location>
        <begin position="637"/>
        <end position="644"/>
    </location>
    <ligand>
        <name>ATP</name>
        <dbReference type="ChEBI" id="CHEBI:30616"/>
    </ligand>
</feature>
<name>DEXH7_ARATH</name>
<evidence type="ECO:0000255" key="1"/>
<evidence type="ECO:0000255" key="2">
    <source>
        <dbReference type="PROSITE-ProRule" id="PRU00541"/>
    </source>
</evidence>
<evidence type="ECO:0000255" key="3">
    <source>
        <dbReference type="PROSITE-ProRule" id="PRU00542"/>
    </source>
</evidence>
<evidence type="ECO:0000256" key="4">
    <source>
        <dbReference type="SAM" id="MobiDB-lite"/>
    </source>
</evidence>
<evidence type="ECO:0000305" key="5"/>
<evidence type="ECO:0000312" key="6">
    <source>
        <dbReference type="Araport" id="AT1G58060"/>
    </source>
</evidence>
<evidence type="ECO:0000312" key="7">
    <source>
        <dbReference type="EMBL" id="AAG50701.1"/>
    </source>
</evidence>
<proteinExistence type="evidence at transcript level"/>
<sequence length="1459" mass="163600">MAPKKKPQKQSNKAASSSSSSKSNYQKPSSGPKLQISAENEDRLRRLLLNSGRSGPSIPAPISNSLSKAQKTKKLNNVYEKLSCEGFVDDQIELALSSLRDGATFEAALDWLCLNLPSHELPVKFSTGASRFPSTGGSVGVISTSRDDWNDSTDSSVRVEEEEPAVFVRVKGKQDEEDTLSSDKSSQADWIRQYMMRQEEEELECWEDEVDGIDPRNKVSGPRPFDVIAKEYYSARSDAIKAKEKRDKRGQEQAGLAIRKLKQEISDLGLSEAMLESEFQREHAFESATEQESTCPISDNLHESVDADDVSVQMLDNLTLNTNPAESYESEEIQTKALPSSSSGQDFVASDEDSEDVELGDTFFEEIPPSEISPHELLELQKEEKMRELRSEKNLGKLDGIWKKGEAQKIPKAFLHQLCQRSGWEAPKFNKETGEGRNFSYTVSILRKASGRGKNRQAGGLVTLQLPPKDENFESIEDAQNKVAAFALHKLFSDLPVHFAITEPYASLVLIWKQEELLCTTIQSTEEDRRANFVDKLLEEDSFSLTTSSSSFENSLPLVDSYVKDKDDLGVVKSNNRAKRDSYIEAECLSLQRKQENKKRTQKYKDMLKTRTALPISEVKNGILQHLKEKDVLVVCGETGSGKTTQVPQFILDDMIDSGHGGYCNIICTQPRRIAAISVAQRVADERCESSPGLDDSLVGYQVRLESARSDKTRLLFCTTGILLRKLAGDRTLNDVTHIIVDEVHERSLLGDFLLIILKSLIEKQSCDNTSRKLKVILMSATVDADLFSRYFGHCPVITAQGRTHPVTTHFLEEIYESINYLLAPDSPAALRSDTSIKDKLGSVNDRRGKKNLVLAGWGDDYLLSEDCLNPFYVSSNYNSYSDQTQQNLKRLNEDRIDYELLEELICHIDDTCEEGAILIFLPGVAEIYMLLDMLAASYRFRGPAADWLLPLHSSIASSEQRKVFLRPPKGLRKVIAATNIAETSITIDDVVYVIDSGKHKENRYNPQKKLSSMVEDWISQANARQRTGRAGRVKPGICFSLYTRYRFEKLMRPYQVPEMLRMPLVELCLQIKLLGLGHIKPFLSRALEPPSEGAMTSAISLLHEVGAVEGDEELTPLGHHLAKLPVDVLIGKMLLYGGIFGCLSPILSIAAFLSYKSPFIYPKDEKQNVDRVKLALLSDNGVSSSDLNNNDRQSDHLLMMVAYDKWVKILQERGMKAAQRFCESKFLSSSVMRMIRDMRVQFGTLLADIGLINLPKTGEFSGRKKENLDVWFSDPTQPFNMYSQQPEVVKAILCAGLYPNIAANDKGITETTFNSLTKQGNQTKSYSAWYDGRREVHIHPSSINSNFKAFQNPFLVFLEKVETNKVYLRDTTIVSPFSILLFGGSINVHHQSGSVTIDGWLKVAAPAQTAVLFKELRLTLHSILKDLIRKPEKSGIVHNEVVKSMVHLLIEEGKPQHK</sequence>
<protein>
    <recommendedName>
        <fullName evidence="5">DExH-box ATP-dependent RNA helicase DExH7, chloroplastic</fullName>
        <ecNumber evidence="5">3.6.4.13</ecNumber>
    </recommendedName>
</protein>